<gene>
    <name evidence="1" type="primary">sucA</name>
    <name evidence="1" type="synonym">odhA</name>
    <name type="ordered locus">BSUIS_A1763</name>
</gene>
<organism>
    <name type="scientific">Brucella suis (strain ATCC 23445 / NCTC 10510)</name>
    <dbReference type="NCBI Taxonomy" id="470137"/>
    <lineage>
        <taxon>Bacteria</taxon>
        <taxon>Pseudomonadati</taxon>
        <taxon>Pseudomonadota</taxon>
        <taxon>Alphaproteobacteria</taxon>
        <taxon>Hyphomicrobiales</taxon>
        <taxon>Brucellaceae</taxon>
        <taxon>Brucella/Ochrobactrum group</taxon>
        <taxon>Brucella</taxon>
    </lineage>
</organism>
<dbReference type="EC" id="1.2.4.2" evidence="1"/>
<dbReference type="EMBL" id="CP000911">
    <property type="protein sequence ID" value="ABY38780.1"/>
    <property type="molecule type" value="Genomic_DNA"/>
</dbReference>
<dbReference type="RefSeq" id="WP_012247012.1">
    <property type="nucleotide sequence ID" value="NC_010169.1"/>
</dbReference>
<dbReference type="SMR" id="B0CIS7"/>
<dbReference type="KEGG" id="bmt:BSUIS_A1763"/>
<dbReference type="HOGENOM" id="CLU_004709_1_0_5"/>
<dbReference type="Proteomes" id="UP000008545">
    <property type="component" value="Chromosome I"/>
</dbReference>
<dbReference type="GO" id="GO:0005829">
    <property type="term" value="C:cytosol"/>
    <property type="evidence" value="ECO:0007669"/>
    <property type="project" value="TreeGrafter"/>
</dbReference>
<dbReference type="GO" id="GO:0045252">
    <property type="term" value="C:oxoglutarate dehydrogenase complex"/>
    <property type="evidence" value="ECO:0007669"/>
    <property type="project" value="TreeGrafter"/>
</dbReference>
<dbReference type="GO" id="GO:0004591">
    <property type="term" value="F:oxoglutarate dehydrogenase (succinyl-transferring) activity"/>
    <property type="evidence" value="ECO:0007669"/>
    <property type="project" value="UniProtKB-UniRule"/>
</dbReference>
<dbReference type="GO" id="GO:0030976">
    <property type="term" value="F:thiamine pyrophosphate binding"/>
    <property type="evidence" value="ECO:0007669"/>
    <property type="project" value="UniProtKB-UniRule"/>
</dbReference>
<dbReference type="GO" id="GO:0006096">
    <property type="term" value="P:glycolytic process"/>
    <property type="evidence" value="ECO:0007669"/>
    <property type="project" value="UniProtKB-UniRule"/>
</dbReference>
<dbReference type="GO" id="GO:0006099">
    <property type="term" value="P:tricarboxylic acid cycle"/>
    <property type="evidence" value="ECO:0007669"/>
    <property type="project" value="TreeGrafter"/>
</dbReference>
<dbReference type="CDD" id="cd02016">
    <property type="entry name" value="TPP_E1_OGDC_like"/>
    <property type="match status" value="1"/>
</dbReference>
<dbReference type="FunFam" id="3.40.50.12470:FF:000003">
    <property type="entry name" value="2-oxoglutarate dehydrogenase E1 component"/>
    <property type="match status" value="1"/>
</dbReference>
<dbReference type="Gene3D" id="3.40.50.12470">
    <property type="match status" value="1"/>
</dbReference>
<dbReference type="Gene3D" id="3.40.50.970">
    <property type="match status" value="1"/>
</dbReference>
<dbReference type="Gene3D" id="3.40.50.11610">
    <property type="entry name" value="Multifunctional 2-oxoglutarate metabolism enzyme, C-terminal domain"/>
    <property type="match status" value="1"/>
</dbReference>
<dbReference type="Gene3D" id="1.10.287.1150">
    <property type="entry name" value="TPP helical domain"/>
    <property type="match status" value="1"/>
</dbReference>
<dbReference type="HAMAP" id="MF_01169">
    <property type="entry name" value="SucA_OdhA"/>
    <property type="match status" value="1"/>
</dbReference>
<dbReference type="InterPro" id="IPR032106">
    <property type="entry name" value="2-oxogl_dehyd_N"/>
</dbReference>
<dbReference type="InterPro" id="IPR011603">
    <property type="entry name" value="2oxoglutarate_DH_E1"/>
</dbReference>
<dbReference type="InterPro" id="IPR023784">
    <property type="entry name" value="2oxoglutarate_DH_E1_bac"/>
</dbReference>
<dbReference type="InterPro" id="IPR001017">
    <property type="entry name" value="DH_E1"/>
</dbReference>
<dbReference type="InterPro" id="IPR042179">
    <property type="entry name" value="KGD_C_sf"/>
</dbReference>
<dbReference type="InterPro" id="IPR031717">
    <property type="entry name" value="ODO-1/KGD_C"/>
</dbReference>
<dbReference type="InterPro" id="IPR029061">
    <property type="entry name" value="THDP-binding"/>
</dbReference>
<dbReference type="InterPro" id="IPR005475">
    <property type="entry name" value="Transketolase-like_Pyr-bd"/>
</dbReference>
<dbReference type="NCBIfam" id="TIGR00239">
    <property type="entry name" value="2oxo_dh_E1"/>
    <property type="match status" value="1"/>
</dbReference>
<dbReference type="NCBIfam" id="NF006914">
    <property type="entry name" value="PRK09404.1"/>
    <property type="match status" value="1"/>
</dbReference>
<dbReference type="NCBIfam" id="NF008907">
    <property type="entry name" value="PRK12270.1"/>
    <property type="match status" value="1"/>
</dbReference>
<dbReference type="PANTHER" id="PTHR23152:SF4">
    <property type="entry name" value="2-OXOADIPATE DEHYDROGENASE COMPLEX COMPONENT E1"/>
    <property type="match status" value="1"/>
</dbReference>
<dbReference type="PANTHER" id="PTHR23152">
    <property type="entry name" value="2-OXOGLUTARATE DEHYDROGENASE"/>
    <property type="match status" value="1"/>
</dbReference>
<dbReference type="Pfam" id="PF16078">
    <property type="entry name" value="2-oxogl_dehyd_N"/>
    <property type="match status" value="1"/>
</dbReference>
<dbReference type="Pfam" id="PF00676">
    <property type="entry name" value="E1_dh"/>
    <property type="match status" value="1"/>
</dbReference>
<dbReference type="Pfam" id="PF16870">
    <property type="entry name" value="OxoGdeHyase_C"/>
    <property type="match status" value="1"/>
</dbReference>
<dbReference type="Pfam" id="PF02779">
    <property type="entry name" value="Transket_pyr"/>
    <property type="match status" value="1"/>
</dbReference>
<dbReference type="PIRSF" id="PIRSF000157">
    <property type="entry name" value="Oxoglu_dh_E1"/>
    <property type="match status" value="1"/>
</dbReference>
<dbReference type="SMART" id="SM00861">
    <property type="entry name" value="Transket_pyr"/>
    <property type="match status" value="1"/>
</dbReference>
<dbReference type="SUPFAM" id="SSF52518">
    <property type="entry name" value="Thiamin diphosphate-binding fold (THDP-binding)"/>
    <property type="match status" value="2"/>
</dbReference>
<sequence length="1004" mass="112707">MAKQEQAPDRANDVFALTSFLYGGNADYIEELYAKYEDDPNSVDPQWRDFFAKLGDNADDVKKNAEGPSWTRKNWPIAANGELVSALDGNWAEVEKHVTDKLKGKAAKGEAKGAAGTPLTAEEITQAARDSVRAIMMIRAYRMRGHLHANLDPLGLAEKPNDYNELEPENYGFTPADYNRKIFIDNVLGLEYATVPEMLDILKRTYCGAIGVEFMHISDPAEKAWIQERIEGPDKKVAFTPEGKKAILSKLIEAEGFEQFIDVKYKGTKRFGLDGGESLIPALEQIVKRGGQMGLKEVVLGMAHRGRLNVLSQVMGKPHRAIFHEFKGGSYTPDDVEGSGDVKYHLGASSDREFDGNKVHLSLTANPSHLEIVNPVVMGKARAKQDLLVGRTRDDMVPLSERPKVLPLLLHGDAAFAGQGVVAECLGLSGLKGHRVAGTLHFIINNQIGFTTNPAFSRSSPYPSDVAKMIEAPIFHVNGDDPEAVVFAAKVATEFRMTFHKPVVIDMFCYRRFGHNEGDEPSFTQPLMYKAIRAHKTTVQLYGEKLIAEGLVTQDDIDRMKADWRQKLEGEFEAGQSYKPNKADWLDGAWAGLRTADNADEQRRGKTAVPVKTLKEIGKKLVEVPKDFHVHRTIQRFLDNRAKMMETGEGIDWATAESLAFGSLAVEGHPIRLSGQDVERGTFSQRHTVLYDQENQNRYIPLNNLQKGQAIYEAINSMLSEEAVLGYEYGYSLSDPRALVLWEAQFGDFANGAQVVFDQFISSGERKWLRMSGLVCLLPHGFEGQGPEHSSARLERYLQLCAEDNMQVANVTTPANYFHILRRQMKRDFRKPLIMMTPKSLLRHKRAISTLAELSGESSFHRLLWDDAQYNKDEGIKLQKDAKIRRVVLCSGKVYYDLYEEREKRGIDDVYLLRVEQLYPFPAKALINELSRFRHAEMVWCQEEPKNMGAWSFIDPYLEWVLAHIDAKHQRVRYAGRPAAASPATGLMSKHLAQLAAFLEDALG</sequence>
<name>ODO1_BRUSI</name>
<comment type="function">
    <text evidence="1">E1 component of the 2-oxoglutarate dehydrogenase (OGDH) complex which catalyzes the decarboxylation of 2-oxoglutarate, the first step in the conversion of 2-oxoglutarate to succinyl-CoA and CO(2).</text>
</comment>
<comment type="catalytic activity">
    <reaction evidence="1">
        <text>N(6)-[(R)-lipoyl]-L-lysyl-[protein] + 2-oxoglutarate + H(+) = N(6)-[(R)-S(8)-succinyldihydrolipoyl]-L-lysyl-[protein] + CO2</text>
        <dbReference type="Rhea" id="RHEA:12188"/>
        <dbReference type="Rhea" id="RHEA-COMP:10474"/>
        <dbReference type="Rhea" id="RHEA-COMP:20092"/>
        <dbReference type="ChEBI" id="CHEBI:15378"/>
        <dbReference type="ChEBI" id="CHEBI:16526"/>
        <dbReference type="ChEBI" id="CHEBI:16810"/>
        <dbReference type="ChEBI" id="CHEBI:83099"/>
        <dbReference type="ChEBI" id="CHEBI:83120"/>
        <dbReference type="EC" id="1.2.4.2"/>
    </reaction>
</comment>
<comment type="cofactor">
    <cofactor evidence="1">
        <name>thiamine diphosphate</name>
        <dbReference type="ChEBI" id="CHEBI:58937"/>
    </cofactor>
</comment>
<comment type="subunit">
    <text evidence="1">Homodimer. Part of the 2-oxoglutarate dehydrogenase (OGDH) complex composed of E1 (2-oxoglutarate dehydrogenase), E2 (dihydrolipoamide succinyltransferase) and E3 (dihydrolipoamide dehydrogenase); the complex contains multiple copies of the three enzymatic components (E1, E2 and E3).</text>
</comment>
<comment type="similarity">
    <text evidence="1">Belongs to the alpha-ketoglutarate dehydrogenase family.</text>
</comment>
<feature type="chain" id="PRO_1000085386" description="2-oxoglutarate dehydrogenase E1 component">
    <location>
        <begin position="1"/>
        <end position="1004"/>
    </location>
</feature>
<reference key="1">
    <citation type="submission" date="2007-12" db="EMBL/GenBank/DDBJ databases">
        <title>Brucella suis ATCC 23445 whole genome shotgun sequencing project.</title>
        <authorList>
            <person name="Setubal J.C."/>
            <person name="Bowns C."/>
            <person name="Boyle S."/>
            <person name="Crasta O.R."/>
            <person name="Czar M.J."/>
            <person name="Dharmanolla C."/>
            <person name="Gillespie J.J."/>
            <person name="Kenyon R.W."/>
            <person name="Lu J."/>
            <person name="Mane S."/>
            <person name="Mohapatra S."/>
            <person name="Nagrani S."/>
            <person name="Purkayastha A."/>
            <person name="Rajasimha H.K."/>
            <person name="Shallom J.M."/>
            <person name="Shallom S."/>
            <person name="Shukla M."/>
            <person name="Snyder E.E."/>
            <person name="Sobral B.W."/>
            <person name="Wattam A.R."/>
            <person name="Will R."/>
            <person name="Williams K."/>
            <person name="Yoo H."/>
            <person name="Bruce D."/>
            <person name="Detter C."/>
            <person name="Munk C."/>
            <person name="Brettin T.S."/>
        </authorList>
    </citation>
    <scope>NUCLEOTIDE SEQUENCE [LARGE SCALE GENOMIC DNA]</scope>
    <source>
        <strain>ATCC 23445 / NCTC 10510</strain>
    </source>
</reference>
<proteinExistence type="inferred from homology"/>
<protein>
    <recommendedName>
        <fullName evidence="1">2-oxoglutarate dehydrogenase E1 component</fullName>
        <ecNumber evidence="1">1.2.4.2</ecNumber>
    </recommendedName>
    <alternativeName>
        <fullName evidence="1">Alpha-ketoglutarate dehydrogenase</fullName>
    </alternativeName>
</protein>
<evidence type="ECO:0000255" key="1">
    <source>
        <dbReference type="HAMAP-Rule" id="MF_01169"/>
    </source>
</evidence>
<accession>B0CIS7</accession>
<keyword id="KW-0324">Glycolysis</keyword>
<keyword id="KW-0560">Oxidoreductase</keyword>
<keyword id="KW-0786">Thiamine pyrophosphate</keyword>